<dbReference type="EC" id="3.1.1.96" evidence="1"/>
<dbReference type="EMBL" id="AE016795">
    <property type="protein sequence ID" value="AAO09387.1"/>
    <property type="molecule type" value="Genomic_DNA"/>
</dbReference>
<dbReference type="RefSeq" id="WP_011078951.1">
    <property type="nucleotide sequence ID" value="NC_004459.3"/>
</dbReference>
<dbReference type="SMR" id="Q8DDS3"/>
<dbReference type="KEGG" id="vvu:VV1_0884"/>
<dbReference type="HOGENOM" id="CLU_076901_1_1_6"/>
<dbReference type="Proteomes" id="UP000002275">
    <property type="component" value="Chromosome 1"/>
</dbReference>
<dbReference type="GO" id="GO:0005737">
    <property type="term" value="C:cytoplasm"/>
    <property type="evidence" value="ECO:0007669"/>
    <property type="project" value="UniProtKB-SubCell"/>
</dbReference>
<dbReference type="GO" id="GO:0051500">
    <property type="term" value="F:D-tyrosyl-tRNA(Tyr) deacylase activity"/>
    <property type="evidence" value="ECO:0007669"/>
    <property type="project" value="TreeGrafter"/>
</dbReference>
<dbReference type="GO" id="GO:0106026">
    <property type="term" value="F:Gly-tRNA(Ala) deacylase activity"/>
    <property type="evidence" value="ECO:0007669"/>
    <property type="project" value="UniProtKB-UniRule"/>
</dbReference>
<dbReference type="GO" id="GO:0043908">
    <property type="term" value="F:Ser(Gly)-tRNA(Ala) hydrolase activity"/>
    <property type="evidence" value="ECO:0007669"/>
    <property type="project" value="UniProtKB-UniRule"/>
</dbReference>
<dbReference type="GO" id="GO:0000049">
    <property type="term" value="F:tRNA binding"/>
    <property type="evidence" value="ECO:0007669"/>
    <property type="project" value="UniProtKB-UniRule"/>
</dbReference>
<dbReference type="GO" id="GO:0019478">
    <property type="term" value="P:D-amino acid catabolic process"/>
    <property type="evidence" value="ECO:0007669"/>
    <property type="project" value="UniProtKB-UniRule"/>
</dbReference>
<dbReference type="CDD" id="cd00563">
    <property type="entry name" value="Dtyr_deacylase"/>
    <property type="match status" value="1"/>
</dbReference>
<dbReference type="FunFam" id="3.50.80.10:FF:000001">
    <property type="entry name" value="D-aminoacyl-tRNA deacylase"/>
    <property type="match status" value="1"/>
</dbReference>
<dbReference type="Gene3D" id="3.50.80.10">
    <property type="entry name" value="D-tyrosyl-tRNA(Tyr) deacylase"/>
    <property type="match status" value="1"/>
</dbReference>
<dbReference type="HAMAP" id="MF_00518">
    <property type="entry name" value="Deacylase_Dtd"/>
    <property type="match status" value="1"/>
</dbReference>
<dbReference type="InterPro" id="IPR003732">
    <property type="entry name" value="Daa-tRNA_deacyls_DTD"/>
</dbReference>
<dbReference type="InterPro" id="IPR023509">
    <property type="entry name" value="DTD-like_sf"/>
</dbReference>
<dbReference type="NCBIfam" id="TIGR00256">
    <property type="entry name" value="D-aminoacyl-tRNA deacylase"/>
    <property type="match status" value="1"/>
</dbReference>
<dbReference type="PANTHER" id="PTHR10472:SF5">
    <property type="entry name" value="D-AMINOACYL-TRNA DEACYLASE 1"/>
    <property type="match status" value="1"/>
</dbReference>
<dbReference type="PANTHER" id="PTHR10472">
    <property type="entry name" value="D-TYROSYL-TRNA TYR DEACYLASE"/>
    <property type="match status" value="1"/>
</dbReference>
<dbReference type="Pfam" id="PF02580">
    <property type="entry name" value="Tyr_Deacylase"/>
    <property type="match status" value="1"/>
</dbReference>
<dbReference type="SUPFAM" id="SSF69500">
    <property type="entry name" value="DTD-like"/>
    <property type="match status" value="1"/>
</dbReference>
<sequence>MIALIQRVSEAAVRVDGEVVGQIDKGLLVLLGVEKDDDEAKAKRLMERVTTYRVFEDSEGKMNLNVQQVDGKVLVVSQFTLPADTKKGTRAGFSRGAHPADAERLYDYFSDLCQQVLPTERGRFAADMKVSLINDGPVTFWLQV</sequence>
<evidence type="ECO:0000255" key="1">
    <source>
        <dbReference type="HAMAP-Rule" id="MF_00518"/>
    </source>
</evidence>
<accession>Q8DDS3</accession>
<comment type="function">
    <text evidence="1">An aminoacyl-tRNA editing enzyme that deacylates mischarged D-aminoacyl-tRNAs. Also deacylates mischarged glycyl-tRNA(Ala), protecting cells against glycine mischarging by AlaRS. Acts via tRNA-based rather than protein-based catalysis; rejects L-amino acids rather than detecting D-amino acids in the active site. By recycling D-aminoacyl-tRNA to D-amino acids and free tRNA molecules, this enzyme counteracts the toxicity associated with the formation of D-aminoacyl-tRNA entities in vivo and helps enforce protein L-homochirality.</text>
</comment>
<comment type="catalytic activity">
    <reaction evidence="1">
        <text>glycyl-tRNA(Ala) + H2O = tRNA(Ala) + glycine + H(+)</text>
        <dbReference type="Rhea" id="RHEA:53744"/>
        <dbReference type="Rhea" id="RHEA-COMP:9657"/>
        <dbReference type="Rhea" id="RHEA-COMP:13640"/>
        <dbReference type="ChEBI" id="CHEBI:15377"/>
        <dbReference type="ChEBI" id="CHEBI:15378"/>
        <dbReference type="ChEBI" id="CHEBI:57305"/>
        <dbReference type="ChEBI" id="CHEBI:78442"/>
        <dbReference type="ChEBI" id="CHEBI:78522"/>
        <dbReference type="EC" id="3.1.1.96"/>
    </reaction>
</comment>
<comment type="catalytic activity">
    <reaction evidence="1">
        <text>a D-aminoacyl-tRNA + H2O = a tRNA + a D-alpha-amino acid + H(+)</text>
        <dbReference type="Rhea" id="RHEA:13953"/>
        <dbReference type="Rhea" id="RHEA-COMP:10123"/>
        <dbReference type="Rhea" id="RHEA-COMP:10124"/>
        <dbReference type="ChEBI" id="CHEBI:15377"/>
        <dbReference type="ChEBI" id="CHEBI:15378"/>
        <dbReference type="ChEBI" id="CHEBI:59871"/>
        <dbReference type="ChEBI" id="CHEBI:78442"/>
        <dbReference type="ChEBI" id="CHEBI:79333"/>
        <dbReference type="EC" id="3.1.1.96"/>
    </reaction>
</comment>
<comment type="subunit">
    <text evidence="1">Homodimer.</text>
</comment>
<comment type="subcellular location">
    <subcellularLocation>
        <location evidence="1">Cytoplasm</location>
    </subcellularLocation>
</comment>
<comment type="domain">
    <text evidence="1">A Gly-cisPro motif from one monomer fits into the active site of the other monomer to allow specific chiral rejection of L-amino acids.</text>
</comment>
<comment type="similarity">
    <text evidence="1">Belongs to the DTD family.</text>
</comment>
<feature type="chain" id="PRO_0000164618" description="D-aminoacyl-tRNA deacylase">
    <location>
        <begin position="1"/>
        <end position="144"/>
    </location>
</feature>
<feature type="short sequence motif" description="Gly-cisPro motif, important for rejection of L-amino acids" evidence="1">
    <location>
        <begin position="136"/>
        <end position="137"/>
    </location>
</feature>
<protein>
    <recommendedName>
        <fullName evidence="1">D-aminoacyl-tRNA deacylase</fullName>
        <shortName evidence="1">DTD</shortName>
        <ecNumber evidence="1">3.1.1.96</ecNumber>
    </recommendedName>
    <alternativeName>
        <fullName evidence="1">Gly-tRNA(Ala) deacylase</fullName>
    </alternativeName>
</protein>
<proteinExistence type="inferred from homology"/>
<keyword id="KW-0963">Cytoplasm</keyword>
<keyword id="KW-0378">Hydrolase</keyword>
<keyword id="KW-0694">RNA-binding</keyword>
<keyword id="KW-0820">tRNA-binding</keyword>
<reference key="1">
    <citation type="submission" date="2002-12" db="EMBL/GenBank/DDBJ databases">
        <title>Complete genome sequence of Vibrio vulnificus CMCP6.</title>
        <authorList>
            <person name="Rhee J.H."/>
            <person name="Kim S.Y."/>
            <person name="Chung S.S."/>
            <person name="Kim J.J."/>
            <person name="Moon Y.H."/>
            <person name="Jeong H."/>
            <person name="Choy H.E."/>
        </authorList>
    </citation>
    <scope>NUCLEOTIDE SEQUENCE [LARGE SCALE GENOMIC DNA]</scope>
    <source>
        <strain>CMCP6</strain>
    </source>
</reference>
<organism>
    <name type="scientific">Vibrio vulnificus (strain CMCP6)</name>
    <dbReference type="NCBI Taxonomy" id="216895"/>
    <lineage>
        <taxon>Bacteria</taxon>
        <taxon>Pseudomonadati</taxon>
        <taxon>Pseudomonadota</taxon>
        <taxon>Gammaproteobacteria</taxon>
        <taxon>Vibrionales</taxon>
        <taxon>Vibrionaceae</taxon>
        <taxon>Vibrio</taxon>
    </lineage>
</organism>
<gene>
    <name evidence="1" type="primary">dtd</name>
    <name type="ordered locus">VV1_0884</name>
</gene>
<name>DTD_VIBVU</name>